<proteinExistence type="inferred from homology"/>
<sequence>MSQEKYIMAIDQGTTSSRAIIFNQKGEKVSSSQKEFPQIFPHAGWVEHNANQIWNSVQSVIAGAFIESSIKPSQIEAIGITNQRETTVVWDKKTGVPIYNAIVWQSRQTAPIAEQLKQDGHTKMIHEKTGLVIDAYFSATKIRWILDHVPGAQERAEKGELLFGTIDTWLVWKLTDGAVHVTDYSNAARTMLYNIKDLTWDDEILELLNIPKDMLPEVKSNSEIYGKTAAFHFYGGEVPISGMAGDQQAALFGQLAFEPGMVKNTYGTGSFIIMNTGDEMQLSSNNLLTTIGYGINGKVHYALEGSIFIAGSAIQWLRDGLKMIETSPESEQFALASTSDDEVYVVPAFTGLGAPYWDSNARGSVFGLTRGTSKEDFVKATLQSIAYQVRDVIDTMQVDSGIDIQQLRVDGGAAMNNMLMQFQADILGIDIARAKNLETTALGAAFLAGLAVGYWEDMDALKELNATGQLFKASMNESRKEKLYKGWKRAVKATQVFTQEEDADDDAK</sequence>
<feature type="chain" id="PRO_1000020800" description="Glycerol kinase">
    <location>
        <begin position="1"/>
        <end position="508"/>
    </location>
</feature>
<feature type="binding site" evidence="1">
    <location>
        <position position="14"/>
    </location>
    <ligand>
        <name>ADP</name>
        <dbReference type="ChEBI" id="CHEBI:456216"/>
    </ligand>
</feature>
<feature type="binding site" evidence="1">
    <location>
        <position position="14"/>
    </location>
    <ligand>
        <name>ATP</name>
        <dbReference type="ChEBI" id="CHEBI:30616"/>
    </ligand>
</feature>
<feature type="binding site" evidence="1">
    <location>
        <position position="14"/>
    </location>
    <ligand>
        <name>sn-glycerol 3-phosphate</name>
        <dbReference type="ChEBI" id="CHEBI:57597"/>
    </ligand>
</feature>
<feature type="binding site" evidence="1">
    <location>
        <position position="15"/>
    </location>
    <ligand>
        <name>ATP</name>
        <dbReference type="ChEBI" id="CHEBI:30616"/>
    </ligand>
</feature>
<feature type="binding site" evidence="1">
    <location>
        <position position="16"/>
    </location>
    <ligand>
        <name>ATP</name>
        <dbReference type="ChEBI" id="CHEBI:30616"/>
    </ligand>
</feature>
<feature type="binding site" evidence="1">
    <location>
        <position position="18"/>
    </location>
    <ligand>
        <name>ADP</name>
        <dbReference type="ChEBI" id="CHEBI:456216"/>
    </ligand>
</feature>
<feature type="binding site" evidence="1">
    <location>
        <position position="84"/>
    </location>
    <ligand>
        <name>glycerol</name>
        <dbReference type="ChEBI" id="CHEBI:17754"/>
    </ligand>
</feature>
<feature type="binding site" evidence="1">
    <location>
        <position position="84"/>
    </location>
    <ligand>
        <name>sn-glycerol 3-phosphate</name>
        <dbReference type="ChEBI" id="CHEBI:57597"/>
    </ligand>
</feature>
<feature type="binding site" evidence="1">
    <location>
        <position position="85"/>
    </location>
    <ligand>
        <name>glycerol</name>
        <dbReference type="ChEBI" id="CHEBI:17754"/>
    </ligand>
</feature>
<feature type="binding site" evidence="1">
    <location>
        <position position="85"/>
    </location>
    <ligand>
        <name>sn-glycerol 3-phosphate</name>
        <dbReference type="ChEBI" id="CHEBI:57597"/>
    </ligand>
</feature>
<feature type="binding site" evidence="1">
    <location>
        <position position="136"/>
    </location>
    <ligand>
        <name>glycerol</name>
        <dbReference type="ChEBI" id="CHEBI:17754"/>
    </ligand>
</feature>
<feature type="binding site" evidence="1">
    <location>
        <position position="136"/>
    </location>
    <ligand>
        <name>sn-glycerol 3-phosphate</name>
        <dbReference type="ChEBI" id="CHEBI:57597"/>
    </ligand>
</feature>
<feature type="binding site" evidence="1">
    <location>
        <position position="246"/>
    </location>
    <ligand>
        <name>glycerol</name>
        <dbReference type="ChEBI" id="CHEBI:17754"/>
    </ligand>
</feature>
<feature type="binding site" evidence="1">
    <location>
        <position position="246"/>
    </location>
    <ligand>
        <name>sn-glycerol 3-phosphate</name>
        <dbReference type="ChEBI" id="CHEBI:57597"/>
    </ligand>
</feature>
<feature type="binding site" evidence="1">
    <location>
        <position position="247"/>
    </location>
    <ligand>
        <name>glycerol</name>
        <dbReference type="ChEBI" id="CHEBI:17754"/>
    </ligand>
</feature>
<feature type="binding site" evidence="1">
    <location>
        <position position="268"/>
    </location>
    <ligand>
        <name>ADP</name>
        <dbReference type="ChEBI" id="CHEBI:456216"/>
    </ligand>
</feature>
<feature type="binding site" evidence="1">
    <location>
        <position position="268"/>
    </location>
    <ligand>
        <name>ATP</name>
        <dbReference type="ChEBI" id="CHEBI:30616"/>
    </ligand>
</feature>
<feature type="binding site" evidence="1">
    <location>
        <position position="311"/>
    </location>
    <ligand>
        <name>ADP</name>
        <dbReference type="ChEBI" id="CHEBI:456216"/>
    </ligand>
</feature>
<feature type="binding site" evidence="1">
    <location>
        <position position="311"/>
    </location>
    <ligand>
        <name>ATP</name>
        <dbReference type="ChEBI" id="CHEBI:30616"/>
    </ligand>
</feature>
<feature type="binding site" evidence="1">
    <location>
        <position position="315"/>
    </location>
    <ligand>
        <name>ATP</name>
        <dbReference type="ChEBI" id="CHEBI:30616"/>
    </ligand>
</feature>
<feature type="binding site" evidence="1">
    <location>
        <position position="412"/>
    </location>
    <ligand>
        <name>ADP</name>
        <dbReference type="ChEBI" id="CHEBI:456216"/>
    </ligand>
</feature>
<feature type="binding site" evidence="1">
    <location>
        <position position="412"/>
    </location>
    <ligand>
        <name>ATP</name>
        <dbReference type="ChEBI" id="CHEBI:30616"/>
    </ligand>
</feature>
<feature type="binding site" evidence="1">
    <location>
        <position position="416"/>
    </location>
    <ligand>
        <name>ADP</name>
        <dbReference type="ChEBI" id="CHEBI:456216"/>
    </ligand>
</feature>
<feature type="modified residue" description="Phosphohistidine; by HPr" evidence="1">
    <location>
        <position position="232"/>
    </location>
</feature>
<comment type="function">
    <text evidence="1">Key enzyme in the regulation of glycerol uptake and metabolism. Catalyzes the phosphorylation of glycerol to yield sn-glycerol 3-phosphate.</text>
</comment>
<comment type="catalytic activity">
    <reaction evidence="1">
        <text>glycerol + ATP = sn-glycerol 3-phosphate + ADP + H(+)</text>
        <dbReference type="Rhea" id="RHEA:21644"/>
        <dbReference type="ChEBI" id="CHEBI:15378"/>
        <dbReference type="ChEBI" id="CHEBI:17754"/>
        <dbReference type="ChEBI" id="CHEBI:30616"/>
        <dbReference type="ChEBI" id="CHEBI:57597"/>
        <dbReference type="ChEBI" id="CHEBI:456216"/>
        <dbReference type="EC" id="2.7.1.30"/>
    </reaction>
</comment>
<comment type="activity regulation">
    <text evidence="1">Activated by phosphorylation and inhibited by fructose 1,6-bisphosphate (FBP).</text>
</comment>
<comment type="pathway">
    <text evidence="1">Polyol metabolism; glycerol degradation via glycerol kinase pathway; sn-glycerol 3-phosphate from glycerol: step 1/1.</text>
</comment>
<comment type="subunit">
    <text evidence="1">Homotetramer and homodimer (in equilibrium).</text>
</comment>
<comment type="PTM">
    <text evidence="1">The phosphoenolpyruvate-dependent sugar phosphotransferase system (PTS), including enzyme I, and histidine-containing protein (HPr) are required for the phosphorylation, which leads to the activation of the enzyme.</text>
</comment>
<comment type="similarity">
    <text evidence="1">Belongs to the FGGY kinase family.</text>
</comment>
<dbReference type="EC" id="2.7.1.30" evidence="1"/>
<dbReference type="EMBL" id="CP000259">
    <property type="protein sequence ID" value="ABF32566.1"/>
    <property type="molecule type" value="Genomic_DNA"/>
</dbReference>
<dbReference type="RefSeq" id="WP_002983556.1">
    <property type="nucleotide sequence ID" value="NC_008021.1"/>
</dbReference>
<dbReference type="SMR" id="Q1JKK3"/>
<dbReference type="GeneID" id="69900456"/>
<dbReference type="KEGG" id="spk:MGAS9429_Spy1379"/>
<dbReference type="HOGENOM" id="CLU_009281_2_3_9"/>
<dbReference type="UniPathway" id="UPA00618">
    <property type="reaction ID" value="UER00672"/>
</dbReference>
<dbReference type="Proteomes" id="UP000002433">
    <property type="component" value="Chromosome"/>
</dbReference>
<dbReference type="GO" id="GO:0005829">
    <property type="term" value="C:cytosol"/>
    <property type="evidence" value="ECO:0007669"/>
    <property type="project" value="TreeGrafter"/>
</dbReference>
<dbReference type="GO" id="GO:0005524">
    <property type="term" value="F:ATP binding"/>
    <property type="evidence" value="ECO:0007669"/>
    <property type="project" value="UniProtKB-UniRule"/>
</dbReference>
<dbReference type="GO" id="GO:0004370">
    <property type="term" value="F:glycerol kinase activity"/>
    <property type="evidence" value="ECO:0000250"/>
    <property type="project" value="UniProtKB"/>
</dbReference>
<dbReference type="GO" id="GO:0019563">
    <property type="term" value="P:glycerol catabolic process"/>
    <property type="evidence" value="ECO:0007669"/>
    <property type="project" value="UniProtKB-UniRule"/>
</dbReference>
<dbReference type="GO" id="GO:0006071">
    <property type="term" value="P:glycerol metabolic process"/>
    <property type="evidence" value="ECO:0000250"/>
    <property type="project" value="UniProtKB"/>
</dbReference>
<dbReference type="GO" id="GO:0006072">
    <property type="term" value="P:glycerol-3-phosphate metabolic process"/>
    <property type="evidence" value="ECO:0007669"/>
    <property type="project" value="InterPro"/>
</dbReference>
<dbReference type="CDD" id="cd07786">
    <property type="entry name" value="FGGY_EcGK_like"/>
    <property type="match status" value="1"/>
</dbReference>
<dbReference type="FunFam" id="3.30.420.40:FF:000007">
    <property type="entry name" value="Glycerol kinase"/>
    <property type="match status" value="1"/>
</dbReference>
<dbReference type="FunFam" id="3.30.420.40:FF:000008">
    <property type="entry name" value="Glycerol kinase"/>
    <property type="match status" value="1"/>
</dbReference>
<dbReference type="Gene3D" id="3.30.420.40">
    <property type="match status" value="2"/>
</dbReference>
<dbReference type="HAMAP" id="MF_00186">
    <property type="entry name" value="Glycerol_kin"/>
    <property type="match status" value="1"/>
</dbReference>
<dbReference type="InterPro" id="IPR043129">
    <property type="entry name" value="ATPase_NBD"/>
</dbReference>
<dbReference type="InterPro" id="IPR000577">
    <property type="entry name" value="Carb_kinase_FGGY"/>
</dbReference>
<dbReference type="InterPro" id="IPR018483">
    <property type="entry name" value="Carb_kinase_FGGY_CS"/>
</dbReference>
<dbReference type="InterPro" id="IPR018485">
    <property type="entry name" value="FGGY_C"/>
</dbReference>
<dbReference type="InterPro" id="IPR018484">
    <property type="entry name" value="FGGY_N"/>
</dbReference>
<dbReference type="InterPro" id="IPR005999">
    <property type="entry name" value="Glycerol_kin"/>
</dbReference>
<dbReference type="NCBIfam" id="TIGR01311">
    <property type="entry name" value="glycerol_kin"/>
    <property type="match status" value="1"/>
</dbReference>
<dbReference type="NCBIfam" id="NF000756">
    <property type="entry name" value="PRK00047.1"/>
    <property type="match status" value="1"/>
</dbReference>
<dbReference type="PANTHER" id="PTHR10196:SF69">
    <property type="entry name" value="GLYCEROL KINASE"/>
    <property type="match status" value="1"/>
</dbReference>
<dbReference type="PANTHER" id="PTHR10196">
    <property type="entry name" value="SUGAR KINASE"/>
    <property type="match status" value="1"/>
</dbReference>
<dbReference type="Pfam" id="PF02782">
    <property type="entry name" value="FGGY_C"/>
    <property type="match status" value="1"/>
</dbReference>
<dbReference type="Pfam" id="PF00370">
    <property type="entry name" value="FGGY_N"/>
    <property type="match status" value="1"/>
</dbReference>
<dbReference type="PIRSF" id="PIRSF000538">
    <property type="entry name" value="GlpK"/>
    <property type="match status" value="1"/>
</dbReference>
<dbReference type="SUPFAM" id="SSF53067">
    <property type="entry name" value="Actin-like ATPase domain"/>
    <property type="match status" value="2"/>
</dbReference>
<dbReference type="PROSITE" id="PS00933">
    <property type="entry name" value="FGGY_KINASES_1"/>
    <property type="match status" value="1"/>
</dbReference>
<dbReference type="PROSITE" id="PS00445">
    <property type="entry name" value="FGGY_KINASES_2"/>
    <property type="match status" value="1"/>
</dbReference>
<keyword id="KW-0067">ATP-binding</keyword>
<keyword id="KW-0319">Glycerol metabolism</keyword>
<keyword id="KW-0418">Kinase</keyword>
<keyword id="KW-0547">Nucleotide-binding</keyword>
<keyword id="KW-0597">Phosphoprotein</keyword>
<keyword id="KW-0808">Transferase</keyword>
<organism>
    <name type="scientific">Streptococcus pyogenes serotype M12 (strain MGAS9429)</name>
    <dbReference type="NCBI Taxonomy" id="370551"/>
    <lineage>
        <taxon>Bacteria</taxon>
        <taxon>Bacillati</taxon>
        <taxon>Bacillota</taxon>
        <taxon>Bacilli</taxon>
        <taxon>Lactobacillales</taxon>
        <taxon>Streptococcaceae</taxon>
        <taxon>Streptococcus</taxon>
    </lineage>
</organism>
<accession>Q1JKK3</accession>
<gene>
    <name evidence="1" type="primary">glpK</name>
    <name type="ordered locus">MGAS9429_Spy1379</name>
</gene>
<reference key="1">
    <citation type="journal article" date="2006" name="Proc. Natl. Acad. Sci. U.S.A.">
        <title>Molecular genetic anatomy of inter- and intraserotype variation in the human bacterial pathogen group A Streptococcus.</title>
        <authorList>
            <person name="Beres S.B."/>
            <person name="Richter E.W."/>
            <person name="Nagiec M.J."/>
            <person name="Sumby P."/>
            <person name="Porcella S.F."/>
            <person name="DeLeo F.R."/>
            <person name="Musser J.M."/>
        </authorList>
    </citation>
    <scope>NUCLEOTIDE SEQUENCE [LARGE SCALE GENOMIC DNA]</scope>
    <source>
        <strain>MGAS9429</strain>
    </source>
</reference>
<name>GLPK_STRPC</name>
<protein>
    <recommendedName>
        <fullName evidence="1">Glycerol kinase</fullName>
        <ecNumber evidence="1">2.7.1.30</ecNumber>
    </recommendedName>
    <alternativeName>
        <fullName evidence="1">ATP:glycerol 3-phosphotransferase</fullName>
    </alternativeName>
    <alternativeName>
        <fullName evidence="1">Glycerokinase</fullName>
        <shortName evidence="1">GK</shortName>
    </alternativeName>
</protein>
<evidence type="ECO:0000255" key="1">
    <source>
        <dbReference type="HAMAP-Rule" id="MF_00186"/>
    </source>
</evidence>